<comment type="function">
    <text evidence="1">Probably deamidates glutamine residues to glutamate on methyl-accepting chemotaxis receptors (MCPs), playing an important role in chemotaxis.</text>
</comment>
<comment type="catalytic activity">
    <reaction evidence="1">
        <text>L-glutaminyl-[protein] + H2O = L-glutamyl-[protein] + NH4(+)</text>
        <dbReference type="Rhea" id="RHEA:16441"/>
        <dbReference type="Rhea" id="RHEA-COMP:10207"/>
        <dbReference type="Rhea" id="RHEA-COMP:10208"/>
        <dbReference type="ChEBI" id="CHEBI:15377"/>
        <dbReference type="ChEBI" id="CHEBI:28938"/>
        <dbReference type="ChEBI" id="CHEBI:29973"/>
        <dbReference type="ChEBI" id="CHEBI:30011"/>
        <dbReference type="EC" id="3.5.1.44"/>
    </reaction>
</comment>
<comment type="similarity">
    <text evidence="1">Belongs to the CheD family.</text>
</comment>
<name>CHED_METMP</name>
<gene>
    <name evidence="1" type="primary">cheD</name>
    <name type="ordered locus">MMP0928</name>
</gene>
<dbReference type="EC" id="3.5.1.44" evidence="1"/>
<dbReference type="EMBL" id="BX950229">
    <property type="protein sequence ID" value="CAF30484.1"/>
    <property type="molecule type" value="Genomic_DNA"/>
</dbReference>
<dbReference type="RefSeq" id="WP_011170872.1">
    <property type="nucleotide sequence ID" value="NC_005791.1"/>
</dbReference>
<dbReference type="SMR" id="Q6LYR0"/>
<dbReference type="STRING" id="267377.MMP0928"/>
<dbReference type="EnsemblBacteria" id="CAF30484">
    <property type="protein sequence ID" value="CAF30484"/>
    <property type="gene ID" value="MMP0928"/>
</dbReference>
<dbReference type="GeneID" id="2761315"/>
<dbReference type="KEGG" id="mmp:MMP0928"/>
<dbReference type="PATRIC" id="fig|267377.15.peg.956"/>
<dbReference type="eggNOG" id="arCOG02380">
    <property type="taxonomic scope" value="Archaea"/>
</dbReference>
<dbReference type="HOGENOM" id="CLU_087854_2_0_2"/>
<dbReference type="OrthoDB" id="10499at2157"/>
<dbReference type="Proteomes" id="UP000000590">
    <property type="component" value="Chromosome"/>
</dbReference>
<dbReference type="GO" id="GO:0050568">
    <property type="term" value="F:protein-glutamine glutaminase activity"/>
    <property type="evidence" value="ECO:0007669"/>
    <property type="project" value="UniProtKB-UniRule"/>
</dbReference>
<dbReference type="GO" id="GO:0006935">
    <property type="term" value="P:chemotaxis"/>
    <property type="evidence" value="ECO:0007669"/>
    <property type="project" value="UniProtKB-UniRule"/>
</dbReference>
<dbReference type="CDD" id="cd16352">
    <property type="entry name" value="CheD"/>
    <property type="match status" value="1"/>
</dbReference>
<dbReference type="Gene3D" id="3.30.1330.200">
    <property type="match status" value="1"/>
</dbReference>
<dbReference type="HAMAP" id="MF_01440">
    <property type="entry name" value="CheD"/>
    <property type="match status" value="1"/>
</dbReference>
<dbReference type="InterPro" id="IPR038592">
    <property type="entry name" value="CheD-like_sf"/>
</dbReference>
<dbReference type="InterPro" id="IPR005659">
    <property type="entry name" value="Chemorcpt_Glu_NH3ase_CheD"/>
</dbReference>
<dbReference type="InterPro" id="IPR011324">
    <property type="entry name" value="Cytotoxic_necrot_fac-like_cat"/>
</dbReference>
<dbReference type="PANTHER" id="PTHR35147">
    <property type="entry name" value="CHEMORECEPTOR GLUTAMINE DEAMIDASE CHED-RELATED"/>
    <property type="match status" value="1"/>
</dbReference>
<dbReference type="PANTHER" id="PTHR35147:SF1">
    <property type="entry name" value="CHEMORECEPTOR GLUTAMINE DEAMIDASE CHED-RELATED"/>
    <property type="match status" value="1"/>
</dbReference>
<dbReference type="Pfam" id="PF03975">
    <property type="entry name" value="CheD"/>
    <property type="match status" value="1"/>
</dbReference>
<dbReference type="SUPFAM" id="SSF64438">
    <property type="entry name" value="CNF1/YfiH-like putative cysteine hydrolases"/>
    <property type="match status" value="1"/>
</dbReference>
<accession>Q6LYR0</accession>
<reference key="1">
    <citation type="journal article" date="2004" name="J. Bacteriol.">
        <title>Complete genome sequence of the genetically tractable hydrogenotrophic methanogen Methanococcus maripaludis.</title>
        <authorList>
            <person name="Hendrickson E.L."/>
            <person name="Kaul R."/>
            <person name="Zhou Y."/>
            <person name="Bovee D."/>
            <person name="Chapman P."/>
            <person name="Chung J."/>
            <person name="Conway de Macario E."/>
            <person name="Dodsworth J.A."/>
            <person name="Gillett W."/>
            <person name="Graham D.E."/>
            <person name="Hackett M."/>
            <person name="Haydock A.K."/>
            <person name="Kang A."/>
            <person name="Land M.L."/>
            <person name="Levy R."/>
            <person name="Lie T.J."/>
            <person name="Major T.A."/>
            <person name="Moore B.C."/>
            <person name="Porat I."/>
            <person name="Palmeiri A."/>
            <person name="Rouse G."/>
            <person name="Saenphimmachak C."/>
            <person name="Soell D."/>
            <person name="Van Dien S."/>
            <person name="Wang T."/>
            <person name="Whitman W.B."/>
            <person name="Xia Q."/>
            <person name="Zhang Y."/>
            <person name="Larimer F.W."/>
            <person name="Olson M.V."/>
            <person name="Leigh J.A."/>
        </authorList>
    </citation>
    <scope>NUCLEOTIDE SEQUENCE [LARGE SCALE GENOMIC DNA]</scope>
    <source>
        <strain>DSM 14266 / JCM 13030 / NBRC 101832 / S2 / LL</strain>
    </source>
</reference>
<evidence type="ECO:0000255" key="1">
    <source>
        <dbReference type="HAMAP-Rule" id="MF_01440"/>
    </source>
</evidence>
<keyword id="KW-0145">Chemotaxis</keyword>
<keyword id="KW-0378">Hydrolase</keyword>
<keyword id="KW-1185">Reference proteome</keyword>
<protein>
    <recommendedName>
        <fullName evidence="1">Probable chemoreceptor glutamine deamidase CheD</fullName>
        <ecNumber evidence="1">3.5.1.44</ecNumber>
    </recommendedName>
</protein>
<organism>
    <name type="scientific">Methanococcus maripaludis (strain DSM 14266 / JCM 13030 / NBRC 101832 / S2 / LL)</name>
    <dbReference type="NCBI Taxonomy" id="267377"/>
    <lineage>
        <taxon>Archaea</taxon>
        <taxon>Methanobacteriati</taxon>
        <taxon>Methanobacteriota</taxon>
        <taxon>Methanomada group</taxon>
        <taxon>Methanococci</taxon>
        <taxon>Methanococcales</taxon>
        <taxon>Methanococcaceae</taxon>
        <taxon>Methanococcus</taxon>
    </lineage>
</organism>
<feature type="chain" id="PRO_0000251088" description="Probable chemoreceptor glutamine deamidase CheD">
    <location>
        <begin position="1"/>
        <end position="154"/>
    </location>
</feature>
<proteinExistence type="inferred from homology"/>
<sequence length="154" mass="16387">MVLKVKMGDIGVAKSPESIETLLGSCVAIILYDRGKKIGGVAHVMLPKSRNSSEKNPGKYANTAIPELINRMAKLGARKDKLTTKLAGGAAMFKCNSNTIDVGKKNIEASREEVKKMGLRIASEDLGGDTGRTITLSLKDGSVLVRTGSELKTI</sequence>